<feature type="chain" id="PRO_0000183348" description="Cytochrome c oxidase subunit 1">
    <location>
        <begin position="1"/>
        <end position="534"/>
    </location>
</feature>
<feature type="transmembrane region" description="Helical" evidence="3">
    <location>
        <begin position="16"/>
        <end position="36"/>
    </location>
</feature>
<feature type="transmembrane region" description="Helical" evidence="3">
    <location>
        <begin position="57"/>
        <end position="77"/>
    </location>
</feature>
<feature type="transmembrane region" description="Helical" evidence="3">
    <location>
        <begin position="101"/>
        <end position="121"/>
    </location>
</feature>
<feature type="transmembrane region" description="Helical" evidence="3">
    <location>
        <begin position="147"/>
        <end position="167"/>
    </location>
</feature>
<feature type="transmembrane region" description="Helical" evidence="3">
    <location>
        <begin position="182"/>
        <end position="202"/>
    </location>
</feature>
<feature type="transmembrane region" description="Helical" evidence="3">
    <location>
        <begin position="235"/>
        <end position="255"/>
    </location>
</feature>
<feature type="transmembrane region" description="Helical" evidence="3">
    <location>
        <begin position="267"/>
        <end position="287"/>
    </location>
</feature>
<feature type="transmembrane region" description="Helical" evidence="3">
    <location>
        <begin position="310"/>
        <end position="330"/>
    </location>
</feature>
<feature type="transmembrane region" description="Helical" evidence="3">
    <location>
        <begin position="338"/>
        <end position="358"/>
    </location>
</feature>
<feature type="transmembrane region" description="Helical" evidence="3">
    <location>
        <begin position="372"/>
        <end position="392"/>
    </location>
</feature>
<feature type="transmembrane region" description="Helical" evidence="3">
    <location>
        <begin position="412"/>
        <end position="432"/>
    </location>
</feature>
<feature type="transmembrane region" description="Helical" evidence="3">
    <location>
        <begin position="452"/>
        <end position="472"/>
    </location>
</feature>
<feature type="binding site" evidence="2">
    <location>
        <position position="39"/>
    </location>
    <ligand>
        <name>Ca(2+)</name>
        <dbReference type="ChEBI" id="CHEBI:29108"/>
    </ligand>
</feature>
<feature type="binding site" evidence="2">
    <location>
        <position position="42"/>
    </location>
    <ligand>
        <name>Ca(2+)</name>
        <dbReference type="ChEBI" id="CHEBI:29108"/>
    </ligand>
</feature>
<feature type="binding site" evidence="2">
    <location>
        <position position="44"/>
    </location>
    <ligand>
        <name>Ca(2+)</name>
        <dbReference type="ChEBI" id="CHEBI:29108"/>
    </ligand>
</feature>
<feature type="binding site" description="axial binding residue" evidence="2">
    <location>
        <position position="62"/>
    </location>
    <ligand>
        <name>Fe(II)-heme a</name>
        <dbReference type="ChEBI" id="CHEBI:61715"/>
        <note>low-spin</note>
    </ligand>
    <ligandPart>
        <name>Fe</name>
        <dbReference type="ChEBI" id="CHEBI:18248"/>
    </ligandPart>
</feature>
<feature type="binding site" evidence="2">
    <location>
        <position position="241"/>
    </location>
    <ligand>
        <name>Cu cation</name>
        <dbReference type="ChEBI" id="CHEBI:23378"/>
        <label>B</label>
    </ligand>
</feature>
<feature type="binding site" evidence="1">
    <location>
        <position position="245"/>
    </location>
    <ligand>
        <name>O2</name>
        <dbReference type="ChEBI" id="CHEBI:15379"/>
    </ligand>
</feature>
<feature type="binding site" evidence="2">
    <location>
        <position position="290"/>
    </location>
    <ligand>
        <name>Cu cation</name>
        <dbReference type="ChEBI" id="CHEBI:23378"/>
        <label>B</label>
    </ligand>
</feature>
<feature type="binding site" evidence="2">
    <location>
        <position position="291"/>
    </location>
    <ligand>
        <name>Cu cation</name>
        <dbReference type="ChEBI" id="CHEBI:23378"/>
        <label>B</label>
    </ligand>
</feature>
<feature type="binding site" evidence="2">
    <location>
        <position position="368"/>
    </location>
    <ligand>
        <name>Mg(2+)</name>
        <dbReference type="ChEBI" id="CHEBI:18420"/>
        <note>ligand shared with subunit 2</note>
    </ligand>
</feature>
<feature type="binding site" evidence="2">
    <location>
        <position position="369"/>
    </location>
    <ligand>
        <name>Mg(2+)</name>
        <dbReference type="ChEBI" id="CHEBI:18420"/>
        <note>ligand shared with subunit 2</note>
    </ligand>
</feature>
<feature type="binding site" description="axial binding residue" evidence="2">
    <location>
        <position position="376"/>
    </location>
    <ligand>
        <name>heme a3</name>
        <dbReference type="ChEBI" id="CHEBI:83282"/>
        <note>high-spin</note>
    </ligand>
    <ligandPart>
        <name>Fe</name>
        <dbReference type="ChEBI" id="CHEBI:18248"/>
    </ligandPart>
</feature>
<feature type="binding site" description="axial binding residue" evidence="2">
    <location>
        <position position="378"/>
    </location>
    <ligand>
        <name>Fe(II)-heme a</name>
        <dbReference type="ChEBI" id="CHEBI:61715"/>
        <note>low-spin</note>
    </ligand>
    <ligandPart>
        <name>Fe</name>
        <dbReference type="ChEBI" id="CHEBI:18248"/>
    </ligandPart>
</feature>
<feature type="binding site" evidence="2">
    <location>
        <position position="441"/>
    </location>
    <ligand>
        <name>Ca(2+)</name>
        <dbReference type="ChEBI" id="CHEBI:29108"/>
    </ligand>
</feature>
<feature type="cross-link" description="1'-histidyl-3'-tyrosine (His-Tyr)" evidence="2">
    <location>
        <begin position="241"/>
        <end position="245"/>
    </location>
</feature>
<feature type="sequence conflict" description="In Ref. 1; CAA40765." evidence="4" ref="1">
    <original>I</original>
    <variation>M</variation>
    <location>
        <position position="66"/>
    </location>
</feature>
<feature type="sequence conflict" description="In Ref. 1; CAA40765." evidence="4" ref="1">
    <original>RL</original>
    <variation>KM</variation>
    <location>
        <begin position="97"/>
        <end position="98"/>
    </location>
</feature>
<feature type="sequence conflict" description="In Ref. 1; CAA40765." evidence="4" ref="1">
    <original>W</original>
    <variation>G</variation>
    <location>
        <position position="237"/>
    </location>
</feature>
<dbReference type="EC" id="7.1.1.9"/>
<dbReference type="EMBL" id="X57546">
    <property type="protein sequence ID" value="CAA40765.1"/>
    <property type="molecule type" value="Genomic_DNA"/>
</dbReference>
<dbReference type="EMBL" id="AY654900">
    <property type="protein sequence ID" value="AAT64956.1"/>
    <property type="molecule type" value="Genomic_DNA"/>
</dbReference>
<dbReference type="EMBL" id="X15999">
    <property type="protein sequence ID" value="CAA34130.1"/>
    <property type="molecule type" value="Genomic_DNA"/>
</dbReference>
<dbReference type="PIR" id="S17993">
    <property type="entry name" value="S17993"/>
</dbReference>
<dbReference type="RefSeq" id="YP_054500.1">
    <property type="nucleotide sequence ID" value="NC_006077.1"/>
</dbReference>
<dbReference type="SMR" id="P20386"/>
<dbReference type="FunCoup" id="P20386">
    <property type="interactions" value="623"/>
</dbReference>
<dbReference type="STRING" id="284590.P20386"/>
<dbReference type="PaxDb" id="284590-P20386"/>
<dbReference type="GeneID" id="2914076"/>
<dbReference type="KEGG" id="kla:KllafMp05"/>
<dbReference type="InParanoid" id="P20386"/>
<dbReference type="UniPathway" id="UPA00705"/>
<dbReference type="GO" id="GO:0005743">
    <property type="term" value="C:mitochondrial inner membrane"/>
    <property type="evidence" value="ECO:0007669"/>
    <property type="project" value="UniProtKB-SubCell"/>
</dbReference>
<dbReference type="GO" id="GO:0045277">
    <property type="term" value="C:respiratory chain complex IV"/>
    <property type="evidence" value="ECO:0007669"/>
    <property type="project" value="InterPro"/>
</dbReference>
<dbReference type="GO" id="GO:0004129">
    <property type="term" value="F:cytochrome-c oxidase activity"/>
    <property type="evidence" value="ECO:0007669"/>
    <property type="project" value="UniProtKB-EC"/>
</dbReference>
<dbReference type="GO" id="GO:0020037">
    <property type="term" value="F:heme binding"/>
    <property type="evidence" value="ECO:0007669"/>
    <property type="project" value="InterPro"/>
</dbReference>
<dbReference type="GO" id="GO:0046872">
    <property type="term" value="F:metal ion binding"/>
    <property type="evidence" value="ECO:0007669"/>
    <property type="project" value="UniProtKB-KW"/>
</dbReference>
<dbReference type="GO" id="GO:0015990">
    <property type="term" value="P:electron transport coupled proton transport"/>
    <property type="evidence" value="ECO:0007669"/>
    <property type="project" value="TreeGrafter"/>
</dbReference>
<dbReference type="GO" id="GO:0006123">
    <property type="term" value="P:mitochondrial electron transport, cytochrome c to oxygen"/>
    <property type="evidence" value="ECO:0007669"/>
    <property type="project" value="TreeGrafter"/>
</dbReference>
<dbReference type="CDD" id="cd01663">
    <property type="entry name" value="Cyt_c_Oxidase_I"/>
    <property type="match status" value="1"/>
</dbReference>
<dbReference type="FunFam" id="1.20.210.10:FF:000001">
    <property type="entry name" value="Cytochrome c oxidase subunit 1"/>
    <property type="match status" value="1"/>
</dbReference>
<dbReference type="Gene3D" id="1.20.210.10">
    <property type="entry name" value="Cytochrome c oxidase-like, subunit I domain"/>
    <property type="match status" value="1"/>
</dbReference>
<dbReference type="InterPro" id="IPR023616">
    <property type="entry name" value="Cyt_c_oxase-like_su1_dom"/>
</dbReference>
<dbReference type="InterPro" id="IPR036927">
    <property type="entry name" value="Cyt_c_oxase-like_su1_sf"/>
</dbReference>
<dbReference type="InterPro" id="IPR000883">
    <property type="entry name" value="Cyt_C_Oxase_1"/>
</dbReference>
<dbReference type="InterPro" id="IPR023615">
    <property type="entry name" value="Cyt_c_Oxase_su1_BS"/>
</dbReference>
<dbReference type="InterPro" id="IPR033944">
    <property type="entry name" value="Cyt_c_oxase_su1_dom"/>
</dbReference>
<dbReference type="PANTHER" id="PTHR10422">
    <property type="entry name" value="CYTOCHROME C OXIDASE SUBUNIT 1"/>
    <property type="match status" value="1"/>
</dbReference>
<dbReference type="PANTHER" id="PTHR10422:SF18">
    <property type="entry name" value="CYTOCHROME C OXIDASE SUBUNIT 1"/>
    <property type="match status" value="1"/>
</dbReference>
<dbReference type="Pfam" id="PF00115">
    <property type="entry name" value="COX1"/>
    <property type="match status" value="1"/>
</dbReference>
<dbReference type="PRINTS" id="PR01165">
    <property type="entry name" value="CYCOXIDASEI"/>
</dbReference>
<dbReference type="SUPFAM" id="SSF81442">
    <property type="entry name" value="Cytochrome c oxidase subunit I-like"/>
    <property type="match status" value="1"/>
</dbReference>
<dbReference type="PROSITE" id="PS50855">
    <property type="entry name" value="COX1"/>
    <property type="match status" value="1"/>
</dbReference>
<dbReference type="PROSITE" id="PS00077">
    <property type="entry name" value="COX1_CUB"/>
    <property type="match status" value="1"/>
</dbReference>
<organism>
    <name type="scientific">Kluyveromyces lactis (strain ATCC 8585 / CBS 2359 / DSM 70799 / NBRC 1267 / NRRL Y-1140 / WM37)</name>
    <name type="common">Yeast</name>
    <name type="synonym">Candida sphaerica</name>
    <dbReference type="NCBI Taxonomy" id="284590"/>
    <lineage>
        <taxon>Eukaryota</taxon>
        <taxon>Fungi</taxon>
        <taxon>Dikarya</taxon>
        <taxon>Ascomycota</taxon>
        <taxon>Saccharomycotina</taxon>
        <taxon>Saccharomycetes</taxon>
        <taxon>Saccharomycetales</taxon>
        <taxon>Saccharomycetaceae</taxon>
        <taxon>Kluyveromyces</taxon>
    </lineage>
</organism>
<comment type="function">
    <text evidence="2">Component of the cytochrome c oxidase, the last enzyme in the mitochondrial electron transport chain which drives oxidative phosphorylation. The respiratory chain contains 3 multisubunit complexes succinate dehydrogenase (complex II, CII), ubiquinol-cytochrome c oxidoreductase (cytochrome b-c1 complex, complex III, CIII) and cytochrome c oxidase (complex IV, CIV), that cooperate to transfer electrons derived from NADH and succinate to molecular oxygen, creating an electrochemical gradient over the inner membrane that drives transmembrane transport and the ATP synthase. Cytochrome c oxidase is the component of the respiratory chain that catalyzes the reduction of oxygen to water. Electrons originating from reduced cytochrome c in the intermembrane space (IMS) are transferred via the dinuclear copper A center (CU(A)) of subunit 2 and heme A of subunit 1 to the active site in subunit 1, a binuclear center (BNC) formed by heme A3 and copper B (CU(B)). The BNC reduces molecular oxygen to 2 water molecules using 4 electrons from cytochrome c in the IMS and 4 protons from the mitochondrial matrix.</text>
</comment>
<comment type="catalytic activity">
    <reaction evidence="2">
        <text>4 Fe(II)-[cytochrome c] + O2 + 8 H(+)(in) = 4 Fe(III)-[cytochrome c] + 2 H2O + 4 H(+)(out)</text>
        <dbReference type="Rhea" id="RHEA:11436"/>
        <dbReference type="Rhea" id="RHEA-COMP:10350"/>
        <dbReference type="Rhea" id="RHEA-COMP:14399"/>
        <dbReference type="ChEBI" id="CHEBI:15377"/>
        <dbReference type="ChEBI" id="CHEBI:15378"/>
        <dbReference type="ChEBI" id="CHEBI:15379"/>
        <dbReference type="ChEBI" id="CHEBI:29033"/>
        <dbReference type="ChEBI" id="CHEBI:29034"/>
        <dbReference type="EC" id="7.1.1.9"/>
    </reaction>
    <physiologicalReaction direction="left-to-right" evidence="2">
        <dbReference type="Rhea" id="RHEA:11437"/>
    </physiologicalReaction>
</comment>
<comment type="cofactor">
    <cofactor evidence="2">
        <name>heme</name>
        <dbReference type="ChEBI" id="CHEBI:30413"/>
    </cofactor>
    <text evidence="2">Binds 2 heme A groups non-covalently per subunit.</text>
</comment>
<comment type="cofactor">
    <cofactor evidence="2">
        <name>Cu cation</name>
        <dbReference type="ChEBI" id="CHEBI:23378"/>
    </cofactor>
    <text evidence="2">Binds a copper B center.</text>
</comment>
<comment type="pathway">
    <text evidence="2">Energy metabolism; oxidative phosphorylation.</text>
</comment>
<comment type="subunit">
    <text evidence="2">Component of the cytochrome c oxidase (complex IV, CIV), a multisubunit enzyme composed of a catalytic core of 3 subunits and several supernumerary subunits. The complex exists as a monomer or a dimer and forms supercomplexes (SCs) in the inner mitochondrial membrane with ubiquinol-cytochrome c oxidoreductase (cytochrome b-c1 complex, complex III, CIII).</text>
</comment>
<comment type="subcellular location">
    <subcellularLocation>
        <location evidence="2">Mitochondrion inner membrane</location>
        <topology evidence="2">Multi-pass membrane protein</topology>
    </subcellularLocation>
</comment>
<comment type="similarity">
    <text evidence="4">Belongs to the heme-copper respiratory oxidase family.</text>
</comment>
<reference key="1">
    <citation type="journal article" date="1991" name="Curr. Genet.">
        <title>Nucleotide sequence of the COX1 gene in Kluyveromyces lactis mitochondrial DNA: evidence for recent horizontal transfer of a group II intron.</title>
        <authorList>
            <person name="Hardy C.M."/>
            <person name="Clark-Walker G.D."/>
        </authorList>
    </citation>
    <scope>NUCLEOTIDE SEQUENCE [GENOMIC DNA]</scope>
    <source>
        <strain>ATCC 90735 / K8</strain>
    </source>
</reference>
<reference key="2">
    <citation type="journal article" date="2005" name="FEMS Yeast Res.">
        <title>Complete nucleotide sequence of the mitochondrial DNA from Kluyveromyces lactis.</title>
        <authorList>
            <person name="Zivanovic Y."/>
            <person name="Wincker P."/>
            <person name="Vacherie B."/>
            <person name="Bolotin-Fukuhara M."/>
            <person name="Fukuhara H."/>
        </authorList>
    </citation>
    <scope>NUCLEOTIDE SEQUENCE [LARGE SCALE GENOMIC DNA]</scope>
    <source>
        <strain>ATCC 76492 / CBS 2359/152 / CLIB 210</strain>
    </source>
</reference>
<reference key="3">
    <citation type="journal article" date="1990" name="Yeast">
        <title>Nucleotide sequence of the cytochrome oxidase subunit 2 and val-tRNA genes and surrounding sequences from Kluyveromyces lactis K8 mitochondrial DNA.</title>
        <authorList>
            <person name="Hardy C.M."/>
            <person name="Clark-Walker G.D."/>
        </authorList>
    </citation>
    <scope>NUCLEOTIDE SEQUENCE [GENOMIC DNA] OF 1-29</scope>
    <source>
        <strain>ATCC 90735 / K8</strain>
    </source>
</reference>
<sequence length="534" mass="58798">MIERWLYSTNAKDIAVLYFIFAIFCGMAGTAMSLIIRLELAAPGNQVLSGNHQLFNVLVVGHAVLIIFFLVMPALIGGFGNYMLPLLIGASDMSFARLNNISFWCLPPALVCLVTSTLVESGAGTGWTVYPPLSSIQAHSGPSVDLAIFALHLTSISSLLGAINFIVTTLNMRTNGMTMHRLPLFVWSIFITAFLLLLSLPVLSAGVTMLLLDRNFNTSFFEVAGGGDPVLYQHLFWFFGHPEVYILIIPGFGIISHIVSTYSKKPVFGEVSMVYAMASIGLLGFLVWSHHMYIVGLDADTRAYFTSATMIIAIPTGIKIFSWLATIYGGSIRLAVPMLYAIAFLFLFTIGGLTGVALANASLDVAFHDTYYVVGHFHYVLSMGAIFSLFAGYYYWSPQILGLYYNEKLAQIQFWLIFVGANVIFLPMHFLGVNGMPRRIPDYPDAFAGWNYVASIGSIIAVFSLFLFIYILYDQLVNGLENKVNNKSVIYNKGPDFVESNQIFATNKIKSSSIEFLLTSPPAVHTFNTPAVQS</sequence>
<name>COX1_KLULA</name>
<evidence type="ECO:0000250" key="1">
    <source>
        <dbReference type="UniProtKB" id="P00396"/>
    </source>
</evidence>
<evidence type="ECO:0000250" key="2">
    <source>
        <dbReference type="UniProtKB" id="P00401"/>
    </source>
</evidence>
<evidence type="ECO:0000255" key="3"/>
<evidence type="ECO:0000305" key="4"/>
<accession>P20386</accession>
<accession>Q6DN59</accession>
<protein>
    <recommendedName>
        <fullName>Cytochrome c oxidase subunit 1</fullName>
        <ecNumber>7.1.1.9</ecNumber>
    </recommendedName>
    <alternativeName>
        <fullName>Cytochrome c oxidase polypeptide I</fullName>
    </alternativeName>
</protein>
<keyword id="KW-0106">Calcium</keyword>
<keyword id="KW-0186">Copper</keyword>
<keyword id="KW-0249">Electron transport</keyword>
<keyword id="KW-0349">Heme</keyword>
<keyword id="KW-0408">Iron</keyword>
<keyword id="KW-0460">Magnesium</keyword>
<keyword id="KW-0472">Membrane</keyword>
<keyword id="KW-0479">Metal-binding</keyword>
<keyword id="KW-0496">Mitochondrion</keyword>
<keyword id="KW-0999">Mitochondrion inner membrane</keyword>
<keyword id="KW-0679">Respiratory chain</keyword>
<keyword id="KW-1278">Translocase</keyword>
<keyword id="KW-0812">Transmembrane</keyword>
<keyword id="KW-1133">Transmembrane helix</keyword>
<keyword id="KW-0813">Transport</keyword>
<gene>
    <name type="primary">COX1</name>
</gene>
<proteinExistence type="inferred from homology"/>
<geneLocation type="mitochondrion"/>